<accession>B1W3Z4</accession>
<organism>
    <name type="scientific">Streptomyces griseus subsp. griseus (strain JCM 4626 / CBS 651.72 / NBRC 13350 / KCC S-0626 / ISP 5235)</name>
    <dbReference type="NCBI Taxonomy" id="455632"/>
    <lineage>
        <taxon>Bacteria</taxon>
        <taxon>Bacillati</taxon>
        <taxon>Actinomycetota</taxon>
        <taxon>Actinomycetes</taxon>
        <taxon>Kitasatosporales</taxon>
        <taxon>Streptomycetaceae</taxon>
        <taxon>Streptomyces</taxon>
    </lineage>
</organism>
<comment type="function">
    <text evidence="1">Binds 16S rRNA, required for the assembly of 30S particles and may also be responsible for determining the conformation of the 16S rRNA at the A site.</text>
</comment>
<comment type="cofactor">
    <cofactor evidence="1">
        <name>Zn(2+)</name>
        <dbReference type="ChEBI" id="CHEBI:29105"/>
    </cofactor>
    <text evidence="1">Binds 1 zinc ion per subunit.</text>
</comment>
<comment type="subunit">
    <text evidence="1">Part of the 30S ribosomal subunit. Contacts proteins S3 and S10.</text>
</comment>
<comment type="similarity">
    <text evidence="1">Belongs to the universal ribosomal protein uS14 family. Zinc-binding uS14 subfamily.</text>
</comment>
<dbReference type="EMBL" id="AP009493">
    <property type="protein sequence ID" value="BAG19650.1"/>
    <property type="molecule type" value="Genomic_DNA"/>
</dbReference>
<dbReference type="RefSeq" id="WP_003948630.1">
    <property type="nucleotide sequence ID" value="NC_010572.1"/>
</dbReference>
<dbReference type="SMR" id="B1W3Z4"/>
<dbReference type="KEGG" id="sgr:SGR_2821"/>
<dbReference type="eggNOG" id="COG0199">
    <property type="taxonomic scope" value="Bacteria"/>
</dbReference>
<dbReference type="HOGENOM" id="CLU_139869_3_0_11"/>
<dbReference type="Proteomes" id="UP000001685">
    <property type="component" value="Chromosome"/>
</dbReference>
<dbReference type="GO" id="GO:0005737">
    <property type="term" value="C:cytoplasm"/>
    <property type="evidence" value="ECO:0007669"/>
    <property type="project" value="UniProtKB-ARBA"/>
</dbReference>
<dbReference type="GO" id="GO:0015935">
    <property type="term" value="C:small ribosomal subunit"/>
    <property type="evidence" value="ECO:0007669"/>
    <property type="project" value="TreeGrafter"/>
</dbReference>
<dbReference type="GO" id="GO:0019843">
    <property type="term" value="F:rRNA binding"/>
    <property type="evidence" value="ECO:0007669"/>
    <property type="project" value="UniProtKB-UniRule"/>
</dbReference>
<dbReference type="GO" id="GO:0003735">
    <property type="term" value="F:structural constituent of ribosome"/>
    <property type="evidence" value="ECO:0007669"/>
    <property type="project" value="InterPro"/>
</dbReference>
<dbReference type="GO" id="GO:0008270">
    <property type="term" value="F:zinc ion binding"/>
    <property type="evidence" value="ECO:0007669"/>
    <property type="project" value="UniProtKB-UniRule"/>
</dbReference>
<dbReference type="GO" id="GO:0006412">
    <property type="term" value="P:translation"/>
    <property type="evidence" value="ECO:0007669"/>
    <property type="project" value="UniProtKB-UniRule"/>
</dbReference>
<dbReference type="FunFam" id="4.10.830.10:FF:000001">
    <property type="entry name" value="30S ribosomal protein S14 type Z"/>
    <property type="match status" value="1"/>
</dbReference>
<dbReference type="Gene3D" id="4.10.830.10">
    <property type="entry name" value="30s Ribosomal Protein S14, Chain N"/>
    <property type="match status" value="1"/>
</dbReference>
<dbReference type="HAMAP" id="MF_01364_B">
    <property type="entry name" value="Ribosomal_uS14_2_B"/>
    <property type="match status" value="1"/>
</dbReference>
<dbReference type="InterPro" id="IPR001209">
    <property type="entry name" value="Ribosomal_uS14"/>
</dbReference>
<dbReference type="InterPro" id="IPR023053">
    <property type="entry name" value="Ribosomal_uS14_bact"/>
</dbReference>
<dbReference type="InterPro" id="IPR018271">
    <property type="entry name" value="Ribosomal_uS14_CS"/>
</dbReference>
<dbReference type="InterPro" id="IPR043140">
    <property type="entry name" value="Ribosomal_uS14_sf"/>
</dbReference>
<dbReference type="NCBIfam" id="NF005974">
    <property type="entry name" value="PRK08061.1"/>
    <property type="match status" value="1"/>
</dbReference>
<dbReference type="PANTHER" id="PTHR19836">
    <property type="entry name" value="30S RIBOSOMAL PROTEIN S14"/>
    <property type="match status" value="1"/>
</dbReference>
<dbReference type="PANTHER" id="PTHR19836:SF19">
    <property type="entry name" value="SMALL RIBOSOMAL SUBUNIT PROTEIN US14M"/>
    <property type="match status" value="1"/>
</dbReference>
<dbReference type="Pfam" id="PF00253">
    <property type="entry name" value="Ribosomal_S14"/>
    <property type="match status" value="1"/>
</dbReference>
<dbReference type="SUPFAM" id="SSF57716">
    <property type="entry name" value="Glucocorticoid receptor-like (DNA-binding domain)"/>
    <property type="match status" value="1"/>
</dbReference>
<dbReference type="PROSITE" id="PS00527">
    <property type="entry name" value="RIBOSOMAL_S14"/>
    <property type="match status" value="1"/>
</dbReference>
<gene>
    <name evidence="1" type="primary">rpsZ</name>
    <name evidence="1" type="synonym">rpsN</name>
    <name type="ordered locus">SGR_2821</name>
</gene>
<proteinExistence type="inferred from homology"/>
<keyword id="KW-0479">Metal-binding</keyword>
<keyword id="KW-0687">Ribonucleoprotein</keyword>
<keyword id="KW-0689">Ribosomal protein</keyword>
<keyword id="KW-0694">RNA-binding</keyword>
<keyword id="KW-0699">rRNA-binding</keyword>
<keyword id="KW-0862">Zinc</keyword>
<protein>
    <recommendedName>
        <fullName evidence="1">Small ribosomal subunit protein uS14B</fullName>
    </recommendedName>
    <alternativeName>
        <fullName evidence="2">30S ribosomal protein S14 type Z</fullName>
    </alternativeName>
</protein>
<name>RS14Z_STRGG</name>
<sequence>MAKKALIAKAARKPKFGVRGYTRCQRCGRPHSVYRKFGLCRVCLREMAHRGELPGVTKSSW</sequence>
<reference key="1">
    <citation type="journal article" date="2008" name="J. Bacteriol.">
        <title>Genome sequence of the streptomycin-producing microorganism Streptomyces griseus IFO 13350.</title>
        <authorList>
            <person name="Ohnishi Y."/>
            <person name="Ishikawa J."/>
            <person name="Hara H."/>
            <person name="Suzuki H."/>
            <person name="Ikenoya M."/>
            <person name="Ikeda H."/>
            <person name="Yamashita A."/>
            <person name="Hattori M."/>
            <person name="Horinouchi S."/>
        </authorList>
    </citation>
    <scope>NUCLEOTIDE SEQUENCE [LARGE SCALE GENOMIC DNA]</scope>
    <source>
        <strain>JCM 4626 / CBS 651.72 / NBRC 13350 / KCC S-0626 / ISP 5235</strain>
    </source>
</reference>
<feature type="chain" id="PRO_1000143919" description="Small ribosomal subunit protein uS14B">
    <location>
        <begin position="1"/>
        <end position="61"/>
    </location>
</feature>
<feature type="binding site" evidence="1">
    <location>
        <position position="24"/>
    </location>
    <ligand>
        <name>Zn(2+)</name>
        <dbReference type="ChEBI" id="CHEBI:29105"/>
    </ligand>
</feature>
<feature type="binding site" evidence="1">
    <location>
        <position position="27"/>
    </location>
    <ligand>
        <name>Zn(2+)</name>
        <dbReference type="ChEBI" id="CHEBI:29105"/>
    </ligand>
</feature>
<feature type="binding site" evidence="1">
    <location>
        <position position="40"/>
    </location>
    <ligand>
        <name>Zn(2+)</name>
        <dbReference type="ChEBI" id="CHEBI:29105"/>
    </ligand>
</feature>
<feature type="binding site" evidence="1">
    <location>
        <position position="43"/>
    </location>
    <ligand>
        <name>Zn(2+)</name>
        <dbReference type="ChEBI" id="CHEBI:29105"/>
    </ligand>
</feature>
<evidence type="ECO:0000255" key="1">
    <source>
        <dbReference type="HAMAP-Rule" id="MF_01364"/>
    </source>
</evidence>
<evidence type="ECO:0000305" key="2"/>